<protein>
    <recommendedName>
        <fullName evidence="1">UDP-N-acetylenolpyruvoylglucosamine reductase</fullName>
        <ecNumber evidence="1">1.3.1.98</ecNumber>
    </recommendedName>
    <alternativeName>
        <fullName evidence="1">UDP-N-acetylmuramate dehydrogenase</fullName>
    </alternativeName>
</protein>
<dbReference type="EC" id="1.3.1.98" evidence="1"/>
<dbReference type="EMBL" id="AE008922">
    <property type="protein sequence ID" value="AAM41077.1"/>
    <property type="molecule type" value="Genomic_DNA"/>
</dbReference>
<dbReference type="RefSeq" id="NP_637153.1">
    <property type="nucleotide sequence ID" value="NC_003902.1"/>
</dbReference>
<dbReference type="RefSeq" id="WP_011036960.1">
    <property type="nucleotide sequence ID" value="NC_003902.1"/>
</dbReference>
<dbReference type="SMR" id="Q8P9R1"/>
<dbReference type="STRING" id="190485.XCC1787"/>
<dbReference type="EnsemblBacteria" id="AAM41077">
    <property type="protein sequence ID" value="AAM41077"/>
    <property type="gene ID" value="XCC1787"/>
</dbReference>
<dbReference type="KEGG" id="xcc:XCC1787"/>
<dbReference type="PATRIC" id="fig|190485.4.peg.1906"/>
<dbReference type="eggNOG" id="COG0812">
    <property type="taxonomic scope" value="Bacteria"/>
</dbReference>
<dbReference type="HOGENOM" id="CLU_035304_0_0_6"/>
<dbReference type="OrthoDB" id="9804753at2"/>
<dbReference type="UniPathway" id="UPA00219"/>
<dbReference type="Proteomes" id="UP000001010">
    <property type="component" value="Chromosome"/>
</dbReference>
<dbReference type="GO" id="GO:0005829">
    <property type="term" value="C:cytosol"/>
    <property type="evidence" value="ECO:0000318"/>
    <property type="project" value="GO_Central"/>
</dbReference>
<dbReference type="GO" id="GO:0071949">
    <property type="term" value="F:FAD binding"/>
    <property type="evidence" value="ECO:0007669"/>
    <property type="project" value="InterPro"/>
</dbReference>
<dbReference type="GO" id="GO:0050660">
    <property type="term" value="F:flavin adenine dinucleotide binding"/>
    <property type="evidence" value="ECO:0000318"/>
    <property type="project" value="GO_Central"/>
</dbReference>
<dbReference type="GO" id="GO:0008762">
    <property type="term" value="F:UDP-N-acetylmuramate dehydrogenase activity"/>
    <property type="evidence" value="ECO:0000318"/>
    <property type="project" value="GO_Central"/>
</dbReference>
<dbReference type="GO" id="GO:0051301">
    <property type="term" value="P:cell division"/>
    <property type="evidence" value="ECO:0007669"/>
    <property type="project" value="UniProtKB-KW"/>
</dbReference>
<dbReference type="GO" id="GO:0071555">
    <property type="term" value="P:cell wall organization"/>
    <property type="evidence" value="ECO:0000318"/>
    <property type="project" value="GO_Central"/>
</dbReference>
<dbReference type="GO" id="GO:0009252">
    <property type="term" value="P:peptidoglycan biosynthetic process"/>
    <property type="evidence" value="ECO:0007669"/>
    <property type="project" value="UniProtKB-UniRule"/>
</dbReference>
<dbReference type="GO" id="GO:0008360">
    <property type="term" value="P:regulation of cell shape"/>
    <property type="evidence" value="ECO:0007669"/>
    <property type="project" value="UniProtKB-KW"/>
</dbReference>
<dbReference type="Gene3D" id="3.30.465.10">
    <property type="match status" value="1"/>
</dbReference>
<dbReference type="Gene3D" id="3.90.78.10">
    <property type="entry name" value="UDP-N-acetylenolpyruvoylglucosamine reductase, C-terminal domain"/>
    <property type="match status" value="1"/>
</dbReference>
<dbReference type="Gene3D" id="3.30.43.10">
    <property type="entry name" value="Uridine Diphospho-n-acetylenolpyruvylglucosamine Reductase, domain 2"/>
    <property type="match status" value="1"/>
</dbReference>
<dbReference type="HAMAP" id="MF_00037">
    <property type="entry name" value="MurB"/>
    <property type="match status" value="1"/>
</dbReference>
<dbReference type="InterPro" id="IPR016166">
    <property type="entry name" value="FAD-bd_PCMH"/>
</dbReference>
<dbReference type="InterPro" id="IPR036318">
    <property type="entry name" value="FAD-bd_PCMH-like_sf"/>
</dbReference>
<dbReference type="InterPro" id="IPR016167">
    <property type="entry name" value="FAD-bd_PCMH_sub1"/>
</dbReference>
<dbReference type="InterPro" id="IPR016169">
    <property type="entry name" value="FAD-bd_PCMH_sub2"/>
</dbReference>
<dbReference type="InterPro" id="IPR003170">
    <property type="entry name" value="MurB"/>
</dbReference>
<dbReference type="InterPro" id="IPR011601">
    <property type="entry name" value="MurB_C"/>
</dbReference>
<dbReference type="InterPro" id="IPR036635">
    <property type="entry name" value="MurB_C_sf"/>
</dbReference>
<dbReference type="InterPro" id="IPR006094">
    <property type="entry name" value="Oxid_FAD_bind_N"/>
</dbReference>
<dbReference type="NCBIfam" id="TIGR00179">
    <property type="entry name" value="murB"/>
    <property type="match status" value="1"/>
</dbReference>
<dbReference type="NCBIfam" id="NF000755">
    <property type="entry name" value="PRK00046.1"/>
    <property type="match status" value="1"/>
</dbReference>
<dbReference type="NCBIfam" id="NF010478">
    <property type="entry name" value="PRK13903.1"/>
    <property type="match status" value="1"/>
</dbReference>
<dbReference type="PANTHER" id="PTHR21071">
    <property type="entry name" value="UDP-N-ACETYLENOLPYRUVOYLGLUCOSAMINE REDUCTASE"/>
    <property type="match status" value="1"/>
</dbReference>
<dbReference type="PANTHER" id="PTHR21071:SF4">
    <property type="entry name" value="UDP-N-ACETYLENOLPYRUVOYLGLUCOSAMINE REDUCTASE"/>
    <property type="match status" value="1"/>
</dbReference>
<dbReference type="Pfam" id="PF01565">
    <property type="entry name" value="FAD_binding_4"/>
    <property type="match status" value="1"/>
</dbReference>
<dbReference type="Pfam" id="PF02873">
    <property type="entry name" value="MurB_C"/>
    <property type="match status" value="1"/>
</dbReference>
<dbReference type="SUPFAM" id="SSF56176">
    <property type="entry name" value="FAD-binding/transporter-associated domain-like"/>
    <property type="match status" value="1"/>
</dbReference>
<dbReference type="SUPFAM" id="SSF56194">
    <property type="entry name" value="Uridine diphospho-N-Acetylenolpyruvylglucosamine reductase, MurB, C-terminal domain"/>
    <property type="match status" value="1"/>
</dbReference>
<dbReference type="PROSITE" id="PS51387">
    <property type="entry name" value="FAD_PCMH"/>
    <property type="match status" value="1"/>
</dbReference>
<keyword id="KW-0131">Cell cycle</keyword>
<keyword id="KW-0132">Cell division</keyword>
<keyword id="KW-0133">Cell shape</keyword>
<keyword id="KW-0961">Cell wall biogenesis/degradation</keyword>
<keyword id="KW-0963">Cytoplasm</keyword>
<keyword id="KW-0274">FAD</keyword>
<keyword id="KW-0285">Flavoprotein</keyword>
<keyword id="KW-0521">NADP</keyword>
<keyword id="KW-0560">Oxidoreductase</keyword>
<keyword id="KW-0573">Peptidoglycan synthesis</keyword>
<keyword id="KW-1185">Reference proteome</keyword>
<name>MURB_XANCP</name>
<comment type="function">
    <text evidence="1">Cell wall formation.</text>
</comment>
<comment type="catalytic activity">
    <reaction evidence="1">
        <text>UDP-N-acetyl-alpha-D-muramate + NADP(+) = UDP-N-acetyl-3-O-(1-carboxyvinyl)-alpha-D-glucosamine + NADPH + H(+)</text>
        <dbReference type="Rhea" id="RHEA:12248"/>
        <dbReference type="ChEBI" id="CHEBI:15378"/>
        <dbReference type="ChEBI" id="CHEBI:57783"/>
        <dbReference type="ChEBI" id="CHEBI:58349"/>
        <dbReference type="ChEBI" id="CHEBI:68483"/>
        <dbReference type="ChEBI" id="CHEBI:70757"/>
        <dbReference type="EC" id="1.3.1.98"/>
    </reaction>
</comment>
<comment type="cofactor">
    <cofactor evidence="1">
        <name>FAD</name>
        <dbReference type="ChEBI" id="CHEBI:57692"/>
    </cofactor>
</comment>
<comment type="pathway">
    <text evidence="1">Cell wall biogenesis; peptidoglycan biosynthesis.</text>
</comment>
<comment type="subcellular location">
    <subcellularLocation>
        <location evidence="1">Cytoplasm</location>
    </subcellularLocation>
</comment>
<comment type="similarity">
    <text evidence="1">Belongs to the MurB family.</text>
</comment>
<organism>
    <name type="scientific">Xanthomonas campestris pv. campestris (strain ATCC 33913 / DSM 3586 / NCPPB 528 / LMG 568 / P 25)</name>
    <dbReference type="NCBI Taxonomy" id="190485"/>
    <lineage>
        <taxon>Bacteria</taxon>
        <taxon>Pseudomonadati</taxon>
        <taxon>Pseudomonadota</taxon>
        <taxon>Gammaproteobacteria</taxon>
        <taxon>Lysobacterales</taxon>
        <taxon>Lysobacteraceae</taxon>
        <taxon>Xanthomonas</taxon>
    </lineage>
</organism>
<proteinExistence type="inferred from homology"/>
<accession>Q8P9R1</accession>
<reference key="1">
    <citation type="journal article" date="2002" name="Nature">
        <title>Comparison of the genomes of two Xanthomonas pathogens with differing host specificities.</title>
        <authorList>
            <person name="da Silva A.C.R."/>
            <person name="Ferro J.A."/>
            <person name="Reinach F.C."/>
            <person name="Farah C.S."/>
            <person name="Furlan L.R."/>
            <person name="Quaggio R.B."/>
            <person name="Monteiro-Vitorello C.B."/>
            <person name="Van Sluys M.A."/>
            <person name="Almeida N.F. Jr."/>
            <person name="Alves L.M.C."/>
            <person name="do Amaral A.M."/>
            <person name="Bertolini M.C."/>
            <person name="Camargo L.E.A."/>
            <person name="Camarotte G."/>
            <person name="Cannavan F."/>
            <person name="Cardozo J."/>
            <person name="Chambergo F."/>
            <person name="Ciapina L.P."/>
            <person name="Cicarelli R.M.B."/>
            <person name="Coutinho L.L."/>
            <person name="Cursino-Santos J.R."/>
            <person name="El-Dorry H."/>
            <person name="Faria J.B."/>
            <person name="Ferreira A.J.S."/>
            <person name="Ferreira R.C.C."/>
            <person name="Ferro M.I.T."/>
            <person name="Formighieri E.F."/>
            <person name="Franco M.C."/>
            <person name="Greggio C.C."/>
            <person name="Gruber A."/>
            <person name="Katsuyama A.M."/>
            <person name="Kishi L.T."/>
            <person name="Leite R.P."/>
            <person name="Lemos E.G.M."/>
            <person name="Lemos M.V.F."/>
            <person name="Locali E.C."/>
            <person name="Machado M.A."/>
            <person name="Madeira A.M.B.N."/>
            <person name="Martinez-Rossi N.M."/>
            <person name="Martins E.C."/>
            <person name="Meidanis J."/>
            <person name="Menck C.F.M."/>
            <person name="Miyaki C.Y."/>
            <person name="Moon D.H."/>
            <person name="Moreira L.M."/>
            <person name="Novo M.T.M."/>
            <person name="Okura V.K."/>
            <person name="Oliveira M.C."/>
            <person name="Oliveira V.R."/>
            <person name="Pereira H.A."/>
            <person name="Rossi A."/>
            <person name="Sena J.A.D."/>
            <person name="Silva C."/>
            <person name="de Souza R.F."/>
            <person name="Spinola L.A.F."/>
            <person name="Takita M.A."/>
            <person name="Tamura R.E."/>
            <person name="Teixeira E.C."/>
            <person name="Tezza R.I.D."/>
            <person name="Trindade dos Santos M."/>
            <person name="Truffi D."/>
            <person name="Tsai S.M."/>
            <person name="White F.F."/>
            <person name="Setubal J.C."/>
            <person name="Kitajima J.P."/>
        </authorList>
    </citation>
    <scope>NUCLEOTIDE SEQUENCE [LARGE SCALE GENOMIC DNA]</scope>
    <source>
        <strain>ATCC 33913 / DSM 3586 / NCPPB 528 / LMG 568 / P 25</strain>
    </source>
</reference>
<sequence>MSAASPLRWQLIEHAPLRALNTFHVDATARWLLNIHAPEALPDALAAPQIAGQPLLVLGSGSNVLLAGDPPGCVLCFDNRDITIIAHHADHAIVRAGAGVNWHGLVMYSLQQGLSGLENLALIPGTVGACPIQNIGAYGAQVSDFIHVVEAYDRGTEQFVRLNPAECAFGYRDSVFKQQPDRYLIVAVEFNLPLLHELRLDYAGIRDELARMGAELAGAADVAQAVINIRQRKLPDPEVLGNAGSFFKNPLLPSEQIAALQASFADMPVFPGEQPGQGKLSAAWLIEQCGWKGKREGDAGISEAHALVLVNHGSASGAQLLAFARQVAESVRERYSVILEPEPRVIGAHW</sequence>
<gene>
    <name evidence="1" type="primary">murB</name>
    <name type="ordered locus">XCC1787</name>
</gene>
<feature type="chain" id="PRO_0000179293" description="UDP-N-acetylenolpyruvoylglucosamine reductase">
    <location>
        <begin position="1"/>
        <end position="350"/>
    </location>
</feature>
<feature type="domain" description="FAD-binding PCMH-type" evidence="1">
    <location>
        <begin position="24"/>
        <end position="195"/>
    </location>
</feature>
<feature type="active site" evidence="1">
    <location>
        <position position="172"/>
    </location>
</feature>
<feature type="active site" description="Proton donor" evidence="1">
    <location>
        <position position="245"/>
    </location>
</feature>
<feature type="active site" evidence="1">
    <location>
        <position position="342"/>
    </location>
</feature>
<evidence type="ECO:0000255" key="1">
    <source>
        <dbReference type="HAMAP-Rule" id="MF_00037"/>
    </source>
</evidence>